<dbReference type="EC" id="2.8.1.-" evidence="1"/>
<dbReference type="EMBL" id="AM743169">
    <property type="protein sequence ID" value="CAQ43713.1"/>
    <property type="status" value="ALT_INIT"/>
    <property type="molecule type" value="Genomic_DNA"/>
</dbReference>
<dbReference type="SMR" id="B2FU61"/>
<dbReference type="EnsemblBacteria" id="CAQ43713">
    <property type="protein sequence ID" value="CAQ43713"/>
    <property type="gene ID" value="Smlt0103"/>
</dbReference>
<dbReference type="KEGG" id="sml:Smlt0103"/>
<dbReference type="eggNOG" id="COG0037">
    <property type="taxonomic scope" value="Bacteria"/>
</dbReference>
<dbReference type="HOGENOM" id="CLU_026481_0_0_6"/>
<dbReference type="Proteomes" id="UP000008840">
    <property type="component" value="Chromosome"/>
</dbReference>
<dbReference type="GO" id="GO:0005737">
    <property type="term" value="C:cytoplasm"/>
    <property type="evidence" value="ECO:0007669"/>
    <property type="project" value="UniProtKB-SubCell"/>
</dbReference>
<dbReference type="GO" id="GO:0051539">
    <property type="term" value="F:4 iron, 4 sulfur cluster binding"/>
    <property type="evidence" value="ECO:0007669"/>
    <property type="project" value="UniProtKB-UniRule"/>
</dbReference>
<dbReference type="GO" id="GO:0005524">
    <property type="term" value="F:ATP binding"/>
    <property type="evidence" value="ECO:0007669"/>
    <property type="project" value="UniProtKB-UniRule"/>
</dbReference>
<dbReference type="GO" id="GO:0000287">
    <property type="term" value="F:magnesium ion binding"/>
    <property type="evidence" value="ECO:0007669"/>
    <property type="project" value="UniProtKB-UniRule"/>
</dbReference>
<dbReference type="GO" id="GO:0016783">
    <property type="term" value="F:sulfurtransferase activity"/>
    <property type="evidence" value="ECO:0007669"/>
    <property type="project" value="UniProtKB-UniRule"/>
</dbReference>
<dbReference type="GO" id="GO:0000049">
    <property type="term" value="F:tRNA binding"/>
    <property type="evidence" value="ECO:0007669"/>
    <property type="project" value="UniProtKB-KW"/>
</dbReference>
<dbReference type="GO" id="GO:0034227">
    <property type="term" value="P:tRNA thio-modification"/>
    <property type="evidence" value="ECO:0007669"/>
    <property type="project" value="UniProtKB-UniRule"/>
</dbReference>
<dbReference type="CDD" id="cd24138">
    <property type="entry name" value="TtcA-like"/>
    <property type="match status" value="1"/>
</dbReference>
<dbReference type="Gene3D" id="3.40.50.620">
    <property type="entry name" value="HUPs"/>
    <property type="match status" value="1"/>
</dbReference>
<dbReference type="HAMAP" id="MF_01850">
    <property type="entry name" value="TtcA"/>
    <property type="match status" value="1"/>
</dbReference>
<dbReference type="InterPro" id="IPR014729">
    <property type="entry name" value="Rossmann-like_a/b/a_fold"/>
</dbReference>
<dbReference type="InterPro" id="IPR011063">
    <property type="entry name" value="TilS/TtcA_N"/>
</dbReference>
<dbReference type="InterPro" id="IPR012089">
    <property type="entry name" value="tRNA_Cyd_32_2_STrfase"/>
</dbReference>
<dbReference type="InterPro" id="IPR035107">
    <property type="entry name" value="tRNA_thiolation_TtcA_Ctu1"/>
</dbReference>
<dbReference type="NCBIfam" id="NF007972">
    <property type="entry name" value="PRK10696.1"/>
    <property type="match status" value="1"/>
</dbReference>
<dbReference type="PANTHER" id="PTHR43686:SF1">
    <property type="entry name" value="AMINOTRAN_5 DOMAIN-CONTAINING PROTEIN"/>
    <property type="match status" value="1"/>
</dbReference>
<dbReference type="PANTHER" id="PTHR43686">
    <property type="entry name" value="SULFURTRANSFERASE-RELATED"/>
    <property type="match status" value="1"/>
</dbReference>
<dbReference type="Pfam" id="PF01171">
    <property type="entry name" value="ATP_bind_3"/>
    <property type="match status" value="1"/>
</dbReference>
<dbReference type="PIRSF" id="PIRSF004976">
    <property type="entry name" value="ATPase_YdaO"/>
    <property type="match status" value="1"/>
</dbReference>
<dbReference type="SUPFAM" id="SSF52402">
    <property type="entry name" value="Adenine nucleotide alpha hydrolases-like"/>
    <property type="match status" value="1"/>
</dbReference>
<evidence type="ECO:0000255" key="1">
    <source>
        <dbReference type="HAMAP-Rule" id="MF_01850"/>
    </source>
</evidence>
<evidence type="ECO:0000256" key="2">
    <source>
        <dbReference type="SAM" id="MobiDB-lite"/>
    </source>
</evidence>
<evidence type="ECO:0000305" key="3"/>
<name>TTCA_STRMK</name>
<proteinExistence type="inferred from homology"/>
<gene>
    <name evidence="1" type="primary">ttcA</name>
    <name type="ordered locus">Smlt0103</name>
</gene>
<keyword id="KW-0004">4Fe-4S</keyword>
<keyword id="KW-0067">ATP-binding</keyword>
<keyword id="KW-0963">Cytoplasm</keyword>
<keyword id="KW-0408">Iron</keyword>
<keyword id="KW-0411">Iron-sulfur</keyword>
<keyword id="KW-0460">Magnesium</keyword>
<keyword id="KW-0479">Metal-binding</keyword>
<keyword id="KW-0547">Nucleotide-binding</keyword>
<keyword id="KW-1185">Reference proteome</keyword>
<keyword id="KW-0694">RNA-binding</keyword>
<keyword id="KW-0808">Transferase</keyword>
<keyword id="KW-0819">tRNA processing</keyword>
<keyword id="KW-0820">tRNA-binding</keyword>
<sequence>MSAVISLPDPQPRAARDPRVAEREQHKLAKRLRRQVGEAIADFGMIEAGDKVMVCLSGGKDSYTLLDVLLQLQKKAPVPFELVAVNLDQKQPDFPEHVLPEYLAGLGVPYHIIEQDTYSVVSRVIPEGKTMCSLCSRLRRGALYNYAETHGFTKIALGHHRDDMVATFFMNLFHHAKLSGMPPKLRSDDGKHVVIRPLAYVRESDIVDYAQARQFPIIPCNLCGSQENLQRRQVGLMLKQWEKDHPGRIEQIARAMGEVRPSQLADTTLFDFMALGRRDDAPLPDAHAWLAGSPADADADPETPTV</sequence>
<protein>
    <recommendedName>
        <fullName evidence="1">tRNA-cytidine(32) 2-sulfurtransferase</fullName>
        <ecNumber evidence="1">2.8.1.-</ecNumber>
    </recommendedName>
    <alternativeName>
        <fullName evidence="1">Two-thiocytidine biosynthesis protein A</fullName>
    </alternativeName>
    <alternativeName>
        <fullName evidence="1">tRNA 2-thiocytidine biosynthesis protein TtcA</fullName>
    </alternativeName>
</protein>
<reference key="1">
    <citation type="journal article" date="2008" name="Genome Biol.">
        <title>The complete genome, comparative and functional analysis of Stenotrophomonas maltophilia reveals an organism heavily shielded by drug resistance determinants.</title>
        <authorList>
            <person name="Crossman L.C."/>
            <person name="Gould V.C."/>
            <person name="Dow J.M."/>
            <person name="Vernikos G.S."/>
            <person name="Okazaki A."/>
            <person name="Sebaihia M."/>
            <person name="Saunders D."/>
            <person name="Arrowsmith C."/>
            <person name="Carver T."/>
            <person name="Peters N."/>
            <person name="Adlem E."/>
            <person name="Kerhornou A."/>
            <person name="Lord A."/>
            <person name="Murphy L."/>
            <person name="Seeger K."/>
            <person name="Squares R."/>
            <person name="Rutter S."/>
            <person name="Quail M.A."/>
            <person name="Rajandream M.A."/>
            <person name="Harris D."/>
            <person name="Churcher C."/>
            <person name="Bentley S.D."/>
            <person name="Parkhill J."/>
            <person name="Thomson N.R."/>
            <person name="Avison M.B."/>
        </authorList>
    </citation>
    <scope>NUCLEOTIDE SEQUENCE [LARGE SCALE GENOMIC DNA]</scope>
    <source>
        <strain>K279a</strain>
    </source>
</reference>
<feature type="chain" id="PRO_0000348859" description="tRNA-cytidine(32) 2-sulfurtransferase">
    <location>
        <begin position="1"/>
        <end position="306"/>
    </location>
</feature>
<feature type="region of interest" description="Disordered" evidence="2">
    <location>
        <begin position="1"/>
        <end position="25"/>
    </location>
</feature>
<feature type="region of interest" description="Disordered" evidence="2">
    <location>
        <begin position="286"/>
        <end position="306"/>
    </location>
</feature>
<feature type="short sequence motif" description="PP-loop motif" evidence="1">
    <location>
        <begin position="57"/>
        <end position="62"/>
    </location>
</feature>
<feature type="compositionally biased region" description="Basic and acidic residues" evidence="2">
    <location>
        <begin position="14"/>
        <end position="25"/>
    </location>
</feature>
<feature type="compositionally biased region" description="Acidic residues" evidence="2">
    <location>
        <begin position="297"/>
        <end position="306"/>
    </location>
</feature>
<feature type="binding site" evidence="1">
    <location>
        <position position="132"/>
    </location>
    <ligand>
        <name>[4Fe-4S] cluster</name>
        <dbReference type="ChEBI" id="CHEBI:49883"/>
    </ligand>
</feature>
<feature type="binding site" evidence="1">
    <location>
        <position position="135"/>
    </location>
    <ligand>
        <name>[4Fe-4S] cluster</name>
        <dbReference type="ChEBI" id="CHEBI:49883"/>
    </ligand>
</feature>
<feature type="binding site" evidence="1">
    <location>
        <position position="223"/>
    </location>
    <ligand>
        <name>[4Fe-4S] cluster</name>
        <dbReference type="ChEBI" id="CHEBI:49883"/>
    </ligand>
</feature>
<comment type="function">
    <text evidence="1">Catalyzes the ATP-dependent 2-thiolation of cytidine in position 32 of tRNA, to form 2-thiocytidine (s(2)C32). The sulfur atoms are provided by the cysteine/cysteine desulfurase (IscS) system.</text>
</comment>
<comment type="catalytic activity">
    <reaction evidence="1">
        <text>cytidine(32) in tRNA + S-sulfanyl-L-cysteinyl-[cysteine desulfurase] + AH2 + ATP = 2-thiocytidine(32) in tRNA + L-cysteinyl-[cysteine desulfurase] + A + AMP + diphosphate + H(+)</text>
        <dbReference type="Rhea" id="RHEA:57048"/>
        <dbReference type="Rhea" id="RHEA-COMP:10288"/>
        <dbReference type="Rhea" id="RHEA-COMP:12157"/>
        <dbReference type="Rhea" id="RHEA-COMP:12158"/>
        <dbReference type="Rhea" id="RHEA-COMP:14821"/>
        <dbReference type="ChEBI" id="CHEBI:13193"/>
        <dbReference type="ChEBI" id="CHEBI:15378"/>
        <dbReference type="ChEBI" id="CHEBI:17499"/>
        <dbReference type="ChEBI" id="CHEBI:29950"/>
        <dbReference type="ChEBI" id="CHEBI:30616"/>
        <dbReference type="ChEBI" id="CHEBI:33019"/>
        <dbReference type="ChEBI" id="CHEBI:61963"/>
        <dbReference type="ChEBI" id="CHEBI:82748"/>
        <dbReference type="ChEBI" id="CHEBI:141453"/>
        <dbReference type="ChEBI" id="CHEBI:456215"/>
    </reaction>
    <physiologicalReaction direction="left-to-right" evidence="1">
        <dbReference type="Rhea" id="RHEA:57049"/>
    </physiologicalReaction>
</comment>
<comment type="cofactor">
    <cofactor evidence="1">
        <name>Mg(2+)</name>
        <dbReference type="ChEBI" id="CHEBI:18420"/>
    </cofactor>
</comment>
<comment type="cofactor">
    <cofactor evidence="1">
        <name>[4Fe-4S] cluster</name>
        <dbReference type="ChEBI" id="CHEBI:49883"/>
    </cofactor>
    <text evidence="1">Binds 1 [4Fe-4S] cluster per subunit. The cluster is chelated by three Cys residues, the fourth Fe has a free coordination site that may bind a sulfur atom transferred from the persulfide of IscS.</text>
</comment>
<comment type="pathway">
    <text evidence="1">tRNA modification.</text>
</comment>
<comment type="subunit">
    <text evidence="1">Homodimer.</text>
</comment>
<comment type="subcellular location">
    <subcellularLocation>
        <location evidence="1">Cytoplasm</location>
    </subcellularLocation>
</comment>
<comment type="miscellaneous">
    <text evidence="1">The thiolation reaction likely consists of two steps: a first activation step by ATP to form an adenylated intermediate of the target base of tRNA, and a second nucleophilic substitution step of the sulfur (S) atom supplied by the hydrosulfide attached to the Fe-S cluster.</text>
</comment>
<comment type="similarity">
    <text evidence="1">Belongs to the TtcA family.</text>
</comment>
<comment type="sequence caution" evidence="3">
    <conflict type="erroneous initiation">
        <sequence resource="EMBL-CDS" id="CAQ43713"/>
    </conflict>
    <text>Extended N-terminus.</text>
</comment>
<accession>B2FU61</accession>
<organism>
    <name type="scientific">Stenotrophomonas maltophilia (strain K279a)</name>
    <dbReference type="NCBI Taxonomy" id="522373"/>
    <lineage>
        <taxon>Bacteria</taxon>
        <taxon>Pseudomonadati</taxon>
        <taxon>Pseudomonadota</taxon>
        <taxon>Gammaproteobacteria</taxon>
        <taxon>Lysobacterales</taxon>
        <taxon>Lysobacteraceae</taxon>
        <taxon>Stenotrophomonas</taxon>
        <taxon>Stenotrophomonas maltophilia group</taxon>
    </lineage>
</organism>